<accession>Q1IKB4</accession>
<organism>
    <name type="scientific">Koribacter versatilis (strain Ellin345)</name>
    <dbReference type="NCBI Taxonomy" id="204669"/>
    <lineage>
        <taxon>Bacteria</taxon>
        <taxon>Pseudomonadati</taxon>
        <taxon>Acidobacteriota</taxon>
        <taxon>Terriglobia</taxon>
        <taxon>Terriglobales</taxon>
        <taxon>Candidatus Korobacteraceae</taxon>
        <taxon>Candidatus Korobacter</taxon>
    </lineage>
</organism>
<reference key="1">
    <citation type="journal article" date="2009" name="Appl. Environ. Microbiol.">
        <title>Three genomes from the phylum Acidobacteria provide insight into the lifestyles of these microorganisms in soils.</title>
        <authorList>
            <person name="Ward N.L."/>
            <person name="Challacombe J.F."/>
            <person name="Janssen P.H."/>
            <person name="Henrissat B."/>
            <person name="Coutinho P.M."/>
            <person name="Wu M."/>
            <person name="Xie G."/>
            <person name="Haft D.H."/>
            <person name="Sait M."/>
            <person name="Badger J."/>
            <person name="Barabote R.D."/>
            <person name="Bradley B."/>
            <person name="Brettin T.S."/>
            <person name="Brinkac L.M."/>
            <person name="Bruce D."/>
            <person name="Creasy T."/>
            <person name="Daugherty S.C."/>
            <person name="Davidsen T.M."/>
            <person name="DeBoy R.T."/>
            <person name="Detter J.C."/>
            <person name="Dodson R.J."/>
            <person name="Durkin A.S."/>
            <person name="Ganapathy A."/>
            <person name="Gwinn-Giglio M."/>
            <person name="Han C.S."/>
            <person name="Khouri H."/>
            <person name="Kiss H."/>
            <person name="Kothari S.P."/>
            <person name="Madupu R."/>
            <person name="Nelson K.E."/>
            <person name="Nelson W.C."/>
            <person name="Paulsen I."/>
            <person name="Penn K."/>
            <person name="Ren Q."/>
            <person name="Rosovitz M.J."/>
            <person name="Selengut J.D."/>
            <person name="Shrivastava S."/>
            <person name="Sullivan S.A."/>
            <person name="Tapia R."/>
            <person name="Thompson L.S."/>
            <person name="Watkins K.L."/>
            <person name="Yang Q."/>
            <person name="Yu C."/>
            <person name="Zafar N."/>
            <person name="Zhou L."/>
            <person name="Kuske C.R."/>
        </authorList>
    </citation>
    <scope>NUCLEOTIDE SEQUENCE [LARGE SCALE GENOMIC DNA]</scope>
    <source>
        <strain>Ellin345</strain>
    </source>
</reference>
<proteinExistence type="inferred from homology"/>
<name>HIS7_KORVE</name>
<feature type="chain" id="PRO_0000336287" description="Imidazoleglycerol-phosphate dehydratase">
    <location>
        <begin position="1"/>
        <end position="195"/>
    </location>
</feature>
<evidence type="ECO:0000255" key="1">
    <source>
        <dbReference type="HAMAP-Rule" id="MF_00076"/>
    </source>
</evidence>
<comment type="catalytic activity">
    <reaction evidence="1">
        <text>D-erythro-1-(imidazol-4-yl)glycerol 3-phosphate = 3-(imidazol-4-yl)-2-oxopropyl phosphate + H2O</text>
        <dbReference type="Rhea" id="RHEA:11040"/>
        <dbReference type="ChEBI" id="CHEBI:15377"/>
        <dbReference type="ChEBI" id="CHEBI:57766"/>
        <dbReference type="ChEBI" id="CHEBI:58278"/>
        <dbReference type="EC" id="4.2.1.19"/>
    </reaction>
</comment>
<comment type="pathway">
    <text evidence="1">Amino-acid biosynthesis; L-histidine biosynthesis; L-histidine from 5-phospho-alpha-D-ribose 1-diphosphate: step 6/9.</text>
</comment>
<comment type="subcellular location">
    <subcellularLocation>
        <location evidence="1">Cytoplasm</location>
    </subcellularLocation>
</comment>
<comment type="similarity">
    <text evidence="1">Belongs to the imidazoleglycerol-phosphate dehydratase family.</text>
</comment>
<keyword id="KW-0028">Amino-acid biosynthesis</keyword>
<keyword id="KW-0963">Cytoplasm</keyword>
<keyword id="KW-0368">Histidine biosynthesis</keyword>
<keyword id="KW-0456">Lyase</keyword>
<keyword id="KW-1185">Reference proteome</keyword>
<protein>
    <recommendedName>
        <fullName evidence="1">Imidazoleglycerol-phosphate dehydratase</fullName>
        <shortName evidence="1">IGPD</shortName>
        <ecNumber evidence="1">4.2.1.19</ecNumber>
    </recommendedName>
</protein>
<sequence length="195" mass="21626">MRKATLDRNTAETKIHLELHVDGKGKYEISTGIRFFDHMLELFTRHGAFDVTLRCEGDLDVDQHHTVEDVGIALGQAFTQALGSKMGILRAGYFVMPMDETLAVAAVDLSGRSAYAVDTKVKVRIVGDLQTELVDDFFEGFSRGALANVHIKVMYGRSNHHKIEASFKAFARALRFACAKDKRLAKVLPSTKGLL</sequence>
<dbReference type="EC" id="4.2.1.19" evidence="1"/>
<dbReference type="EMBL" id="CP000360">
    <property type="protein sequence ID" value="ABF42686.1"/>
    <property type="molecule type" value="Genomic_DNA"/>
</dbReference>
<dbReference type="RefSeq" id="WP_011524485.1">
    <property type="nucleotide sequence ID" value="NC_008009.1"/>
</dbReference>
<dbReference type="SMR" id="Q1IKB4"/>
<dbReference type="STRING" id="204669.Acid345_3685"/>
<dbReference type="EnsemblBacteria" id="ABF42686">
    <property type="protein sequence ID" value="ABF42686"/>
    <property type="gene ID" value="Acid345_3685"/>
</dbReference>
<dbReference type="KEGG" id="aba:Acid345_3685"/>
<dbReference type="eggNOG" id="COG0131">
    <property type="taxonomic scope" value="Bacteria"/>
</dbReference>
<dbReference type="HOGENOM" id="CLU_044308_2_0_0"/>
<dbReference type="OrthoDB" id="9790411at2"/>
<dbReference type="UniPathway" id="UPA00031">
    <property type="reaction ID" value="UER00011"/>
</dbReference>
<dbReference type="Proteomes" id="UP000002432">
    <property type="component" value="Chromosome"/>
</dbReference>
<dbReference type="GO" id="GO:0005737">
    <property type="term" value="C:cytoplasm"/>
    <property type="evidence" value="ECO:0007669"/>
    <property type="project" value="UniProtKB-SubCell"/>
</dbReference>
<dbReference type="GO" id="GO:0004424">
    <property type="term" value="F:imidazoleglycerol-phosphate dehydratase activity"/>
    <property type="evidence" value="ECO:0007669"/>
    <property type="project" value="UniProtKB-UniRule"/>
</dbReference>
<dbReference type="GO" id="GO:0000105">
    <property type="term" value="P:L-histidine biosynthetic process"/>
    <property type="evidence" value="ECO:0007669"/>
    <property type="project" value="UniProtKB-UniRule"/>
</dbReference>
<dbReference type="CDD" id="cd07914">
    <property type="entry name" value="IGPD"/>
    <property type="match status" value="1"/>
</dbReference>
<dbReference type="FunFam" id="3.30.230.40:FF:000001">
    <property type="entry name" value="Imidazoleglycerol-phosphate dehydratase HisB"/>
    <property type="match status" value="1"/>
</dbReference>
<dbReference type="FunFam" id="3.30.230.40:FF:000003">
    <property type="entry name" value="Imidazoleglycerol-phosphate dehydratase HisB"/>
    <property type="match status" value="1"/>
</dbReference>
<dbReference type="Gene3D" id="3.30.230.40">
    <property type="entry name" value="Imidazole glycerol phosphate dehydratase, domain 1"/>
    <property type="match status" value="2"/>
</dbReference>
<dbReference type="HAMAP" id="MF_00076">
    <property type="entry name" value="HisB"/>
    <property type="match status" value="1"/>
</dbReference>
<dbReference type="InterPro" id="IPR038494">
    <property type="entry name" value="IGPD_sf"/>
</dbReference>
<dbReference type="InterPro" id="IPR000807">
    <property type="entry name" value="ImidazoleglycerolP_deHydtase"/>
</dbReference>
<dbReference type="InterPro" id="IPR020565">
    <property type="entry name" value="ImidazoleglycerP_deHydtase_CS"/>
</dbReference>
<dbReference type="InterPro" id="IPR020568">
    <property type="entry name" value="Ribosomal_Su5_D2-typ_SF"/>
</dbReference>
<dbReference type="NCBIfam" id="NF002111">
    <property type="entry name" value="PRK00951.2-1"/>
    <property type="match status" value="1"/>
</dbReference>
<dbReference type="NCBIfam" id="NF002114">
    <property type="entry name" value="PRK00951.2-4"/>
    <property type="match status" value="1"/>
</dbReference>
<dbReference type="PANTHER" id="PTHR23133:SF2">
    <property type="entry name" value="IMIDAZOLEGLYCEROL-PHOSPHATE DEHYDRATASE"/>
    <property type="match status" value="1"/>
</dbReference>
<dbReference type="PANTHER" id="PTHR23133">
    <property type="entry name" value="IMIDAZOLEGLYCEROL-PHOSPHATE DEHYDRATASE HIS7"/>
    <property type="match status" value="1"/>
</dbReference>
<dbReference type="Pfam" id="PF00475">
    <property type="entry name" value="IGPD"/>
    <property type="match status" value="1"/>
</dbReference>
<dbReference type="SUPFAM" id="SSF54211">
    <property type="entry name" value="Ribosomal protein S5 domain 2-like"/>
    <property type="match status" value="2"/>
</dbReference>
<dbReference type="PROSITE" id="PS00954">
    <property type="entry name" value="IGP_DEHYDRATASE_1"/>
    <property type="match status" value="1"/>
</dbReference>
<gene>
    <name evidence="1" type="primary">hisB</name>
    <name type="ordered locus">Acid345_3685</name>
</gene>